<protein>
    <recommendedName>
        <fullName evidence="1">Soluble pyridine nucleotide transhydrogenase</fullName>
        <shortName evidence="1">STH</shortName>
        <ecNumber evidence="1">1.6.1.1</ecNumber>
    </recommendedName>
    <alternativeName>
        <fullName evidence="1">NAD(P)(+) transhydrogenase [B-specific]</fullName>
    </alternativeName>
</protein>
<gene>
    <name evidence="1" type="primary">sthA</name>
    <name evidence="1" type="synonym">udhA</name>
    <name type="ordered locus">ECIAI39_3027</name>
</gene>
<keyword id="KW-0963">Cytoplasm</keyword>
<keyword id="KW-0274">FAD</keyword>
<keyword id="KW-0285">Flavoprotein</keyword>
<keyword id="KW-0520">NAD</keyword>
<keyword id="KW-0521">NADP</keyword>
<keyword id="KW-0560">Oxidoreductase</keyword>
<feature type="chain" id="PRO_1000193453" description="Soluble pyridine nucleotide transhydrogenase">
    <location>
        <begin position="1"/>
        <end position="466"/>
    </location>
</feature>
<feature type="binding site" evidence="1">
    <location>
        <begin position="36"/>
        <end position="45"/>
    </location>
    <ligand>
        <name>FAD</name>
        <dbReference type="ChEBI" id="CHEBI:57692"/>
    </ligand>
</feature>
<sequence length="466" mass="51560">MPHSYDYDAIVIGSGPGGEGAAMGLVKQGARVAVIERYQNVGGGCTHWGTIPSKALRHAVSRIIEFNQNPLYSDHSRLLRSSFADILNHADNVINQQTRMRQGFYERNHCEILQGNARFVDEHTLALDCPDGSVETLTAEKFVIACGSRPYHPTDVDFTHPRIYDSDSILSMHHEPRHVLIYGAGVIGCEYASIFRGMDVKVDLINTRDRLLAFLDQEMSDSLSYHFWNSGVVIRHNEEYEKIEGCDDGVIMHLKSGKKLKADCLLYANGRTGNTDSLALQNIGLETDSRGQLKVNSMYQTAQPHVYAVGDVIGYPSLASAAYDQGRIAAQALVKGEATAHLIEDIPTGIYTIPEISSVGKTEQQLTAMKVPYEVGRAQFKHLARAQIVGMNVGTLKILFHRETKEILGIHCFGERAAEIIHIGQAIMEQKGGGNTIEYFVNTTFNYPTMAEAYRVAALNGLNRLF</sequence>
<reference key="1">
    <citation type="journal article" date="2009" name="PLoS Genet.">
        <title>Organised genome dynamics in the Escherichia coli species results in highly diverse adaptive paths.</title>
        <authorList>
            <person name="Touchon M."/>
            <person name="Hoede C."/>
            <person name="Tenaillon O."/>
            <person name="Barbe V."/>
            <person name="Baeriswyl S."/>
            <person name="Bidet P."/>
            <person name="Bingen E."/>
            <person name="Bonacorsi S."/>
            <person name="Bouchier C."/>
            <person name="Bouvet O."/>
            <person name="Calteau A."/>
            <person name="Chiapello H."/>
            <person name="Clermont O."/>
            <person name="Cruveiller S."/>
            <person name="Danchin A."/>
            <person name="Diard M."/>
            <person name="Dossat C."/>
            <person name="Karoui M.E."/>
            <person name="Frapy E."/>
            <person name="Garry L."/>
            <person name="Ghigo J.M."/>
            <person name="Gilles A.M."/>
            <person name="Johnson J."/>
            <person name="Le Bouguenec C."/>
            <person name="Lescat M."/>
            <person name="Mangenot S."/>
            <person name="Martinez-Jehanne V."/>
            <person name="Matic I."/>
            <person name="Nassif X."/>
            <person name="Oztas S."/>
            <person name="Petit M.A."/>
            <person name="Pichon C."/>
            <person name="Rouy Z."/>
            <person name="Ruf C.S."/>
            <person name="Schneider D."/>
            <person name="Tourret J."/>
            <person name="Vacherie B."/>
            <person name="Vallenet D."/>
            <person name="Medigue C."/>
            <person name="Rocha E.P.C."/>
            <person name="Denamur E."/>
        </authorList>
    </citation>
    <scope>NUCLEOTIDE SEQUENCE [LARGE SCALE GENOMIC DNA]</scope>
    <source>
        <strain>IAI39 / ExPEC</strain>
    </source>
</reference>
<organism>
    <name type="scientific">Escherichia coli O7:K1 (strain IAI39 / ExPEC)</name>
    <dbReference type="NCBI Taxonomy" id="585057"/>
    <lineage>
        <taxon>Bacteria</taxon>
        <taxon>Pseudomonadati</taxon>
        <taxon>Pseudomonadota</taxon>
        <taxon>Gammaproteobacteria</taxon>
        <taxon>Enterobacterales</taxon>
        <taxon>Enterobacteriaceae</taxon>
        <taxon>Escherichia</taxon>
    </lineage>
</organism>
<dbReference type="EC" id="1.6.1.1" evidence="1"/>
<dbReference type="EMBL" id="CU928164">
    <property type="protein sequence ID" value="CAR19146.1"/>
    <property type="molecule type" value="Genomic_DNA"/>
</dbReference>
<dbReference type="RefSeq" id="WP_001120810.1">
    <property type="nucleotide sequence ID" value="NC_011750.1"/>
</dbReference>
<dbReference type="RefSeq" id="YP_002408957.1">
    <property type="nucleotide sequence ID" value="NC_011750.1"/>
</dbReference>
<dbReference type="SMR" id="B7NU38"/>
<dbReference type="STRING" id="585057.ECIAI39_3027"/>
<dbReference type="GeneID" id="75203206"/>
<dbReference type="KEGG" id="ect:ECIAI39_3027"/>
<dbReference type="PATRIC" id="fig|585057.6.peg.3139"/>
<dbReference type="HOGENOM" id="CLU_016755_0_0_6"/>
<dbReference type="Proteomes" id="UP000000749">
    <property type="component" value="Chromosome"/>
</dbReference>
<dbReference type="GO" id="GO:0005829">
    <property type="term" value="C:cytosol"/>
    <property type="evidence" value="ECO:0007669"/>
    <property type="project" value="TreeGrafter"/>
</dbReference>
<dbReference type="GO" id="GO:0004148">
    <property type="term" value="F:dihydrolipoyl dehydrogenase (NADH) activity"/>
    <property type="evidence" value="ECO:0007669"/>
    <property type="project" value="TreeGrafter"/>
</dbReference>
<dbReference type="GO" id="GO:0050660">
    <property type="term" value="F:flavin adenine dinucleotide binding"/>
    <property type="evidence" value="ECO:0007669"/>
    <property type="project" value="TreeGrafter"/>
</dbReference>
<dbReference type="GO" id="GO:0003957">
    <property type="term" value="F:NAD(P)+ transhydrogenase (Si-specific) activity"/>
    <property type="evidence" value="ECO:0007669"/>
    <property type="project" value="UniProtKB-UniRule"/>
</dbReference>
<dbReference type="GO" id="GO:0006103">
    <property type="term" value="P:2-oxoglutarate metabolic process"/>
    <property type="evidence" value="ECO:0007669"/>
    <property type="project" value="TreeGrafter"/>
</dbReference>
<dbReference type="GO" id="GO:0006739">
    <property type="term" value="P:NADP metabolic process"/>
    <property type="evidence" value="ECO:0007669"/>
    <property type="project" value="UniProtKB-UniRule"/>
</dbReference>
<dbReference type="FunFam" id="3.30.390.30:FF:000002">
    <property type="entry name" value="Soluble pyridine nucleotide transhydrogenase"/>
    <property type="match status" value="1"/>
</dbReference>
<dbReference type="FunFam" id="3.50.50.60:FF:000008">
    <property type="entry name" value="Soluble pyridine nucleotide transhydrogenase"/>
    <property type="match status" value="1"/>
</dbReference>
<dbReference type="Gene3D" id="3.30.390.30">
    <property type="match status" value="1"/>
</dbReference>
<dbReference type="Gene3D" id="3.50.50.60">
    <property type="entry name" value="FAD/NAD(P)-binding domain"/>
    <property type="match status" value="2"/>
</dbReference>
<dbReference type="HAMAP" id="MF_00247">
    <property type="entry name" value="SthA"/>
    <property type="match status" value="1"/>
</dbReference>
<dbReference type="InterPro" id="IPR050151">
    <property type="entry name" value="Class-I_Pyr_Nuc-Dis_Oxidored"/>
</dbReference>
<dbReference type="InterPro" id="IPR036188">
    <property type="entry name" value="FAD/NAD-bd_sf"/>
</dbReference>
<dbReference type="InterPro" id="IPR023753">
    <property type="entry name" value="FAD/NAD-binding_dom"/>
</dbReference>
<dbReference type="InterPro" id="IPR016156">
    <property type="entry name" value="FAD/NAD-linked_Rdtase_dimer_sf"/>
</dbReference>
<dbReference type="InterPro" id="IPR001100">
    <property type="entry name" value="Pyr_nuc-diS_OxRdtase"/>
</dbReference>
<dbReference type="InterPro" id="IPR004099">
    <property type="entry name" value="Pyr_nucl-diS_OxRdtase_dimer"/>
</dbReference>
<dbReference type="InterPro" id="IPR022962">
    <property type="entry name" value="STH_gammaproteobact"/>
</dbReference>
<dbReference type="NCBIfam" id="NF003585">
    <property type="entry name" value="PRK05249.1"/>
    <property type="match status" value="1"/>
</dbReference>
<dbReference type="PANTHER" id="PTHR22912">
    <property type="entry name" value="DISULFIDE OXIDOREDUCTASE"/>
    <property type="match status" value="1"/>
</dbReference>
<dbReference type="PANTHER" id="PTHR22912:SF93">
    <property type="entry name" value="SOLUBLE PYRIDINE NUCLEOTIDE TRANSHYDROGENASE"/>
    <property type="match status" value="1"/>
</dbReference>
<dbReference type="Pfam" id="PF07992">
    <property type="entry name" value="Pyr_redox_2"/>
    <property type="match status" value="1"/>
</dbReference>
<dbReference type="Pfam" id="PF02852">
    <property type="entry name" value="Pyr_redox_dim"/>
    <property type="match status" value="1"/>
</dbReference>
<dbReference type="PIRSF" id="PIRSF000350">
    <property type="entry name" value="Mercury_reductase_MerA"/>
    <property type="match status" value="1"/>
</dbReference>
<dbReference type="PRINTS" id="PR00368">
    <property type="entry name" value="FADPNR"/>
</dbReference>
<dbReference type="PRINTS" id="PR00411">
    <property type="entry name" value="PNDRDTASEI"/>
</dbReference>
<dbReference type="SUPFAM" id="SSF51905">
    <property type="entry name" value="FAD/NAD(P)-binding domain"/>
    <property type="match status" value="1"/>
</dbReference>
<dbReference type="SUPFAM" id="SSF55424">
    <property type="entry name" value="FAD/NAD-linked reductases, dimerisation (C-terminal) domain"/>
    <property type="match status" value="1"/>
</dbReference>
<comment type="function">
    <text evidence="1">Conversion of NADPH, generated by peripheral catabolic pathways, to NADH, which can enter the respiratory chain for energy generation.</text>
</comment>
<comment type="catalytic activity">
    <reaction evidence="1">
        <text>NAD(+) + NADPH = NADH + NADP(+)</text>
        <dbReference type="Rhea" id="RHEA:11692"/>
        <dbReference type="ChEBI" id="CHEBI:57540"/>
        <dbReference type="ChEBI" id="CHEBI:57783"/>
        <dbReference type="ChEBI" id="CHEBI:57945"/>
        <dbReference type="ChEBI" id="CHEBI:58349"/>
        <dbReference type="EC" id="1.6.1.1"/>
    </reaction>
</comment>
<comment type="cofactor">
    <cofactor evidence="1">
        <name>FAD</name>
        <dbReference type="ChEBI" id="CHEBI:57692"/>
    </cofactor>
    <text evidence="1">Binds 1 FAD per subunit.</text>
</comment>
<comment type="subcellular location">
    <subcellularLocation>
        <location evidence="1">Cytoplasm</location>
    </subcellularLocation>
</comment>
<comment type="similarity">
    <text evidence="1">Belongs to the class-I pyridine nucleotide-disulfide oxidoreductase family.</text>
</comment>
<accession>B7NU38</accession>
<evidence type="ECO:0000255" key="1">
    <source>
        <dbReference type="HAMAP-Rule" id="MF_00247"/>
    </source>
</evidence>
<name>STHA_ECO7I</name>
<proteinExistence type="inferred from homology"/>